<organism>
    <name type="scientific">Rattus norvegicus</name>
    <name type="common">Rat</name>
    <dbReference type="NCBI Taxonomy" id="10116"/>
    <lineage>
        <taxon>Eukaryota</taxon>
        <taxon>Metazoa</taxon>
        <taxon>Chordata</taxon>
        <taxon>Craniata</taxon>
        <taxon>Vertebrata</taxon>
        <taxon>Euteleostomi</taxon>
        <taxon>Mammalia</taxon>
        <taxon>Eutheria</taxon>
        <taxon>Euarchontoglires</taxon>
        <taxon>Glires</taxon>
        <taxon>Rodentia</taxon>
        <taxon>Myomorpha</taxon>
        <taxon>Muroidea</taxon>
        <taxon>Muridae</taxon>
        <taxon>Murinae</taxon>
        <taxon>Rattus</taxon>
    </lineage>
</organism>
<protein>
    <recommendedName>
        <fullName evidence="8">Acid-sensing ion channel 4</fullName>
        <shortName>ASIC4</shortName>
    </recommendedName>
    <alternativeName>
        <fullName>Amiloride-sensitive cation channel 4</fullName>
    </alternativeName>
    <alternativeName>
        <fullName evidence="7">Spinal cord ASIC</fullName>
    </alternativeName>
</protein>
<proteinExistence type="evidence at protein level"/>
<accession>Q9JHS6</accession>
<accession>Q9QYV9</accession>
<keyword id="KW-1003">Cell membrane</keyword>
<keyword id="KW-1015">Disulfide bond</keyword>
<keyword id="KW-0325">Glycoprotein</keyword>
<keyword id="KW-0407">Ion channel</keyword>
<keyword id="KW-0406">Ion transport</keyword>
<keyword id="KW-0472">Membrane</keyword>
<keyword id="KW-1185">Reference proteome</keyword>
<keyword id="KW-0915">Sodium</keyword>
<keyword id="KW-0894">Sodium channel</keyword>
<keyword id="KW-0739">Sodium transport</keyword>
<keyword id="KW-0812">Transmembrane</keyword>
<keyword id="KW-1133">Transmembrane helix</keyword>
<keyword id="KW-0813">Transport</keyword>
<comment type="function">
    <text evidence="5 6">Does not exhibit measurable stand-alone pH-gated sodium channel activity but may form pH-gated heterotrimeric sodium channels. Its activity could also depend on alternative gating mechanisms.</text>
</comment>
<comment type="subunit">
    <text evidence="2">Homotrimer. Heterotrimer; with other ASIC proteins producing functional channels.</text>
</comment>
<comment type="subcellular location">
    <subcellularLocation>
        <location evidence="1">Cell membrane</location>
        <topology evidence="3">Multi-pass membrane protein</topology>
    </subcellularLocation>
</comment>
<comment type="tissue specificity">
    <text evidence="6">Expressed in brain, spinal cord and dorsal root ganglion (DRG). Expressed by a subset of sensory neurons in the DRG. Expressed by granule cells in the cerebellar cortex. In hippocampus, expression is detected in dentate gyrus granule cells, in pyramidal cells of CA1-CA3 subfields and in interneurons of the striatum oriens and radiatum of all subfields. In cerebral cortex expressed in small, medium and large pyramidal cells in layers 2, 3 and 5 respectively. Also expressed in striatum, globus pallidus, inferior and superior calliculi, amygdala, magnocellular preoptic nucleus, islands of Calleja and large neurons of olfactory tubercules.</text>
</comment>
<comment type="developmental stage">
    <text evidence="6">Highly expressed in newborn spinal cord but hardly detected in the cerebellum compared to adult. Expressed at postnatal day 1 in ependymal cells lining the central canal of spinal cord and in motor neurons. In adult, expression decreases in ependymal cells and increases in motor neurons. The number of positive interneurons decreases but the individual interneuron expression increases in adult spinal cord compared to newborn.</text>
</comment>
<comment type="similarity">
    <text evidence="8">Belongs to the amiloride-sensitive sodium channel (TC 1.A.6) family. ASIC4 subfamily.</text>
</comment>
<feature type="chain" id="PRO_0000181306" description="Acid-sensing ion channel 4">
    <location>
        <begin position="1"/>
        <end position="539"/>
    </location>
</feature>
<feature type="topological domain" description="Cytoplasmic" evidence="8">
    <location>
        <begin position="1"/>
        <end position="68"/>
    </location>
</feature>
<feature type="transmembrane region" description="Helical" evidence="3">
    <location>
        <begin position="69"/>
        <end position="89"/>
    </location>
</feature>
<feature type="topological domain" description="Extracellular" evidence="8">
    <location>
        <begin position="90"/>
        <end position="438"/>
    </location>
</feature>
<feature type="transmembrane region" description="Helical" evidence="3">
    <location>
        <begin position="439"/>
        <end position="459"/>
    </location>
</feature>
<feature type="topological domain" description="Cytoplasmic" evidence="8">
    <location>
        <begin position="460"/>
        <end position="539"/>
    </location>
</feature>
<feature type="region of interest" description="Disordered" evidence="4">
    <location>
        <begin position="501"/>
        <end position="531"/>
    </location>
</feature>
<feature type="short sequence motif" description="GAS motif; ion selectivity filter" evidence="1">
    <location>
        <begin position="452"/>
        <end position="454"/>
    </location>
</feature>
<feature type="glycosylation site" description="N-linked (GlcNAc...) asparagine" evidence="3">
    <location>
        <position position="191"/>
    </location>
</feature>
<feature type="glycosylation site" description="N-linked (GlcNAc...) asparagine" evidence="3">
    <location>
        <position position="243"/>
    </location>
</feature>
<feature type="glycosylation site" description="N-linked (GlcNAc...) asparagine" evidence="3">
    <location>
        <position position="341"/>
    </location>
</feature>
<feature type="glycosylation site" description="N-linked (GlcNAc...) asparagine" evidence="3">
    <location>
        <position position="376"/>
    </location>
</feature>
<feature type="disulfide bond" evidence="1">
    <location>
        <begin position="118"/>
        <end position="202"/>
    </location>
</feature>
<feature type="disulfide bond" evidence="1">
    <location>
        <begin position="180"/>
        <end position="187"/>
    </location>
</feature>
<feature type="disulfide bond" evidence="1">
    <location>
        <begin position="296"/>
        <end position="375"/>
    </location>
</feature>
<feature type="disulfide bond" evidence="1">
    <location>
        <begin position="318"/>
        <end position="371"/>
    </location>
</feature>
<feature type="disulfide bond" evidence="1">
    <location>
        <begin position="322"/>
        <end position="369"/>
    </location>
</feature>
<feature type="disulfide bond" evidence="1">
    <location>
        <begin position="331"/>
        <end position="353"/>
    </location>
</feature>
<feature type="disulfide bond" evidence="1">
    <location>
        <begin position="333"/>
        <end position="345"/>
    </location>
</feature>
<feature type="mutagenesis site" description="No effect on channel function." evidence="5">
    <original>G</original>
    <variation>A</variation>
    <location>
        <position position="441"/>
    </location>
</feature>
<feature type="sequence conflict" description="In Ref. 2; CAB61836." evidence="8" ref="2">
    <original>K</original>
    <variation>E</variation>
    <location>
        <position position="283"/>
    </location>
</feature>
<feature type="sequence conflict" description="In Ref. 2; CAB61836." evidence="8" ref="2">
    <original>K</original>
    <variation>R</variation>
    <location>
        <position position="401"/>
    </location>
</feature>
<feature type="sequence conflict" description="In Ref. 2; CAB61836." evidence="8" ref="2">
    <original>D</original>
    <variation>N</variation>
    <location>
        <position position="536"/>
    </location>
</feature>
<evidence type="ECO:0000250" key="1">
    <source>
        <dbReference type="UniProtKB" id="P78348"/>
    </source>
</evidence>
<evidence type="ECO:0000250" key="2">
    <source>
        <dbReference type="UniProtKB" id="Q708S4"/>
    </source>
</evidence>
<evidence type="ECO:0000255" key="3"/>
<evidence type="ECO:0000256" key="4">
    <source>
        <dbReference type="SAM" id="MobiDB-lite"/>
    </source>
</evidence>
<evidence type="ECO:0000269" key="5">
    <source>
    </source>
</evidence>
<evidence type="ECO:0000269" key="6">
    <source>
    </source>
</evidence>
<evidence type="ECO:0000303" key="7">
    <source>
    </source>
</evidence>
<evidence type="ECO:0000305" key="8"/>
<evidence type="ECO:0000312" key="9">
    <source>
        <dbReference type="RGD" id="621068"/>
    </source>
</evidence>
<sequence length="539" mass="59325">MPIEIVCKIKFAEEDAKPKEKEAGDEQSLLGAAQGPAAPRDLATFASTSTLHGLGRACGPGPHGLRRTLWVLALLTSLAAFLYQAASLARGYLTRPHLVAMDPAAPAPVAGFPAVTLCNINRFRHSALSDADIFHLANLTGLPPKDRDGHRAAGLRYPEPDMVDILNRTGHQLADMLKSCNFSGHHCSASNFSVVYTRYGKCYTFNADPQSSLPSRAGGMGSGLEIMLDIQQEEYLPIWRETNETSFEAGIRVQIHSQEEPPYIHQLGFGVSPGFQTFVSCQKQRLTYLPQPWGNCRAESKLREPELQGYSAYSVSACRLRCEKEAVLQRCHCRMVHMPGNETICPPNIYIECADHTLDSLGGGSEGPCFCPTPCNLTRYGKEISMVKIPNRGSARYLARKYNRNETYIRENFLVLDVFFEALTSEAMEQRAAYGLSALLGDLGGQMGLFIGASILTLLEILDYIYEVSWDRLKRVWRRPKTPLRTSTGGISTLGLQELKEQSPCPNRGRAEGGGASNLLPNHHHPHGPPGSLFEDFAC</sequence>
<reference key="1">
    <citation type="journal article" date="2000" name="NeuroReport">
        <title>A new member of acid-sensing ion channels from pituitary gland.</title>
        <authorList>
            <person name="Gruender S."/>
            <person name="Geisler H.-S."/>
            <person name="Baessler E.-L."/>
            <person name="Ruppersberg J.P."/>
        </authorList>
    </citation>
    <scope>NUCLEOTIDE SEQUENCE [MRNA]</scope>
    <scope>FUNCTION</scope>
    <scope>MUTAGENESIS OF GLY-441</scope>
    <source>
        <tissue>Brain</tissue>
    </source>
</reference>
<reference key="2">
    <citation type="journal article" date="2000" name="NeuroReport">
        <title>A new member of the acid-sensing ion channel family.</title>
        <authorList>
            <person name="Akopian A.N."/>
            <person name="Chen C.-C."/>
            <person name="Ding Y."/>
            <person name="Cesare P."/>
            <person name="Wood J.N."/>
        </authorList>
    </citation>
    <scope>NUCLEOTIDE SEQUENCE [MRNA]</scope>
    <scope>FUNCTION</scope>
    <scope>TISSUE SPECIFICITY</scope>
    <scope>DEVELOPMENTAL STAGE</scope>
    <source>
        <tissue>Spinal ganglion</tissue>
    </source>
</reference>
<name>ASIC4_RAT</name>
<gene>
    <name evidence="9" type="primary">Asic4</name>
    <name evidence="9" type="synonym">Accn4</name>
    <name evidence="7" type="synonym">Spasic</name>
</gene>
<dbReference type="EMBL" id="AJ271642">
    <property type="protein sequence ID" value="CAB93984.1"/>
    <property type="molecule type" value="mRNA"/>
</dbReference>
<dbReference type="EMBL" id="AJ242554">
    <property type="protein sequence ID" value="CAB61836.1"/>
    <property type="molecule type" value="mRNA"/>
</dbReference>
<dbReference type="RefSeq" id="NP_071570.2">
    <property type="nucleotide sequence ID" value="NM_022234.2"/>
</dbReference>
<dbReference type="SMR" id="Q9JHS6"/>
<dbReference type="FunCoup" id="Q9JHS6">
    <property type="interactions" value="113"/>
</dbReference>
<dbReference type="STRING" id="10116.ENSRNOP00000027135"/>
<dbReference type="GlyCosmos" id="Q9JHS6">
    <property type="glycosylation" value="4 sites, No reported glycans"/>
</dbReference>
<dbReference type="GlyGen" id="Q9JHS6">
    <property type="glycosylation" value="5 sites, 1 N-linked glycan (1 site)"/>
</dbReference>
<dbReference type="iPTMnet" id="Q9JHS6"/>
<dbReference type="PhosphoSitePlus" id="Q9JHS6"/>
<dbReference type="PaxDb" id="10116-ENSRNOP00000027135"/>
<dbReference type="GeneID" id="63882"/>
<dbReference type="KEGG" id="rno:63882"/>
<dbReference type="UCSC" id="RGD:621068">
    <property type="organism name" value="rat"/>
</dbReference>
<dbReference type="AGR" id="RGD:621068"/>
<dbReference type="CTD" id="55515"/>
<dbReference type="RGD" id="621068">
    <property type="gene designation" value="Asic4"/>
</dbReference>
<dbReference type="eggNOG" id="KOG4294">
    <property type="taxonomic scope" value="Eukaryota"/>
</dbReference>
<dbReference type="InParanoid" id="Q9JHS6"/>
<dbReference type="OrthoDB" id="48409at9989"/>
<dbReference type="PhylomeDB" id="Q9JHS6"/>
<dbReference type="Reactome" id="R-RNO-2672351">
    <property type="pathway name" value="Stimuli-sensing channels"/>
</dbReference>
<dbReference type="PRO" id="PR:Q9JHS6"/>
<dbReference type="Proteomes" id="UP000002494">
    <property type="component" value="Unplaced"/>
</dbReference>
<dbReference type="GO" id="GO:0005886">
    <property type="term" value="C:plasma membrane"/>
    <property type="evidence" value="ECO:0000318"/>
    <property type="project" value="GO_Central"/>
</dbReference>
<dbReference type="GO" id="GO:0015280">
    <property type="term" value="F:ligand-gated sodium channel activity"/>
    <property type="evidence" value="ECO:0000318"/>
    <property type="project" value="GO_Central"/>
</dbReference>
<dbReference type="GO" id="GO:0001662">
    <property type="term" value="P:behavioral fear response"/>
    <property type="evidence" value="ECO:0000266"/>
    <property type="project" value="RGD"/>
</dbReference>
<dbReference type="GO" id="GO:0035725">
    <property type="term" value="P:sodium ion transmembrane transport"/>
    <property type="evidence" value="ECO:0000318"/>
    <property type="project" value="GO_Central"/>
</dbReference>
<dbReference type="FunFam" id="2.60.470.10:FF:000001">
    <property type="entry name" value="Acid-sensing (proton-gated) ion channel family member 4a"/>
    <property type="match status" value="1"/>
</dbReference>
<dbReference type="FunFam" id="1.10.287.770:FF:000001">
    <property type="entry name" value="Acid-sensing ion channel subunit 1"/>
    <property type="match status" value="1"/>
</dbReference>
<dbReference type="Gene3D" id="2.60.470.10">
    <property type="entry name" value="Acid-sensing ion channels like domains"/>
    <property type="match status" value="1"/>
</dbReference>
<dbReference type="Gene3D" id="1.10.287.770">
    <property type="entry name" value="YojJ-like"/>
    <property type="match status" value="1"/>
</dbReference>
<dbReference type="InterPro" id="IPR001873">
    <property type="entry name" value="ENaC"/>
</dbReference>
<dbReference type="InterPro" id="IPR020903">
    <property type="entry name" value="ENaC_CS"/>
</dbReference>
<dbReference type="PANTHER" id="PTHR11690:SF13">
    <property type="entry name" value="ACID-SENSING ION CHANNEL 4"/>
    <property type="match status" value="1"/>
</dbReference>
<dbReference type="PANTHER" id="PTHR11690">
    <property type="entry name" value="AMILORIDE-SENSITIVE SODIUM CHANNEL-RELATED"/>
    <property type="match status" value="1"/>
</dbReference>
<dbReference type="Pfam" id="PF00858">
    <property type="entry name" value="ASC"/>
    <property type="match status" value="1"/>
</dbReference>
<dbReference type="PRINTS" id="PR01078">
    <property type="entry name" value="AMINACHANNEL"/>
</dbReference>
<dbReference type="PROSITE" id="PS01206">
    <property type="entry name" value="ASC"/>
    <property type="match status" value="1"/>
</dbReference>